<dbReference type="EMBL" id="AB010699">
    <property type="protein sequence ID" value="BAB10898.1"/>
    <property type="status" value="ALT_SEQ"/>
    <property type="molecule type" value="Genomic_DNA"/>
</dbReference>
<dbReference type="EMBL" id="CP002688">
    <property type="protein sequence ID" value="AED94516.1"/>
    <property type="molecule type" value="Genomic_DNA"/>
</dbReference>
<dbReference type="RefSeq" id="NP_198833.1">
    <property type="nucleotide sequence ID" value="NM_123381.3"/>
</dbReference>
<dbReference type="SMR" id="F4KHA2"/>
<dbReference type="FunCoup" id="F4KHA2">
    <property type="interactions" value="116"/>
</dbReference>
<dbReference type="STRING" id="3702.F4KHA2"/>
<dbReference type="GlyCosmos" id="F4KHA2">
    <property type="glycosylation" value="17 sites, No reported glycans"/>
</dbReference>
<dbReference type="GlyGen" id="F4KHA2">
    <property type="glycosylation" value="17 sites"/>
</dbReference>
<dbReference type="PaxDb" id="3702-AT5G40170.1"/>
<dbReference type="ProteomicsDB" id="228011"/>
<dbReference type="EnsemblPlants" id="AT5G40170.1">
    <property type="protein sequence ID" value="AT5G40170.1"/>
    <property type="gene ID" value="AT5G40170"/>
</dbReference>
<dbReference type="GeneID" id="834015"/>
<dbReference type="Gramene" id="AT5G40170.1">
    <property type="protein sequence ID" value="AT5G40170.1"/>
    <property type="gene ID" value="AT5G40170"/>
</dbReference>
<dbReference type="KEGG" id="ath:AT5G40170"/>
<dbReference type="Araport" id="AT5G40170"/>
<dbReference type="TAIR" id="AT5G40170">
    <property type="gene designation" value="RLP54"/>
</dbReference>
<dbReference type="eggNOG" id="KOG0619">
    <property type="taxonomic scope" value="Eukaryota"/>
</dbReference>
<dbReference type="HOGENOM" id="CLU_000288_18_3_1"/>
<dbReference type="InParanoid" id="F4KHA2"/>
<dbReference type="OMA" id="FANWSAP"/>
<dbReference type="PRO" id="PR:F4KHA2"/>
<dbReference type="Proteomes" id="UP000006548">
    <property type="component" value="Chromosome 5"/>
</dbReference>
<dbReference type="ExpressionAtlas" id="F4KHA2">
    <property type="expression patterns" value="baseline and differential"/>
</dbReference>
<dbReference type="GO" id="GO:0005886">
    <property type="term" value="C:plasma membrane"/>
    <property type="evidence" value="ECO:0007669"/>
    <property type="project" value="UniProtKB-SubCell"/>
</dbReference>
<dbReference type="GO" id="GO:0009536">
    <property type="term" value="C:plastid"/>
    <property type="evidence" value="ECO:0007005"/>
    <property type="project" value="TAIR"/>
</dbReference>
<dbReference type="FunFam" id="3.80.10.10:FF:000041">
    <property type="entry name" value="LRR receptor-like serine/threonine-protein kinase ERECTA"/>
    <property type="match status" value="1"/>
</dbReference>
<dbReference type="FunFam" id="3.80.10.10:FF:000213">
    <property type="entry name" value="Tyrosine-sulfated glycopeptide receptor 1"/>
    <property type="match status" value="1"/>
</dbReference>
<dbReference type="Gene3D" id="3.80.10.10">
    <property type="entry name" value="Ribonuclease Inhibitor"/>
    <property type="match status" value="4"/>
</dbReference>
<dbReference type="InterPro" id="IPR001611">
    <property type="entry name" value="Leu-rich_rpt"/>
</dbReference>
<dbReference type="InterPro" id="IPR003591">
    <property type="entry name" value="Leu-rich_rpt_typical-subtyp"/>
</dbReference>
<dbReference type="InterPro" id="IPR032675">
    <property type="entry name" value="LRR_dom_sf"/>
</dbReference>
<dbReference type="InterPro" id="IPR055414">
    <property type="entry name" value="LRR_R13L4/SHOC2-like"/>
</dbReference>
<dbReference type="InterPro" id="IPR046956">
    <property type="entry name" value="RLP23-like"/>
</dbReference>
<dbReference type="PANTHER" id="PTHR48061">
    <property type="entry name" value="LEUCINE-RICH REPEAT RECEPTOR PROTEIN KINASE EMS1-LIKE-RELATED"/>
    <property type="match status" value="1"/>
</dbReference>
<dbReference type="PANTHER" id="PTHR48061:SF2">
    <property type="entry name" value="RECEPTOR LIKE PROTEIN 30-LIKE"/>
    <property type="match status" value="1"/>
</dbReference>
<dbReference type="Pfam" id="PF00560">
    <property type="entry name" value="LRR_1"/>
    <property type="match status" value="1"/>
</dbReference>
<dbReference type="Pfam" id="PF23598">
    <property type="entry name" value="LRR_14"/>
    <property type="match status" value="1"/>
</dbReference>
<dbReference type="Pfam" id="PF13516">
    <property type="entry name" value="LRR_6"/>
    <property type="match status" value="1"/>
</dbReference>
<dbReference type="Pfam" id="PF13855">
    <property type="entry name" value="LRR_8"/>
    <property type="match status" value="2"/>
</dbReference>
<dbReference type="PRINTS" id="PR00019">
    <property type="entry name" value="LEURICHRPT"/>
</dbReference>
<dbReference type="SMART" id="SM00365">
    <property type="entry name" value="LRR_SD22"/>
    <property type="match status" value="4"/>
</dbReference>
<dbReference type="SMART" id="SM00369">
    <property type="entry name" value="LRR_TYP"/>
    <property type="match status" value="9"/>
</dbReference>
<dbReference type="SUPFAM" id="SSF52058">
    <property type="entry name" value="L domain-like"/>
    <property type="match status" value="2"/>
</dbReference>
<dbReference type="PROSITE" id="PS51450">
    <property type="entry name" value="LRR"/>
    <property type="match status" value="14"/>
</dbReference>
<comment type="subcellular location">
    <subcellularLocation>
        <location evidence="4">Cell membrane</location>
        <topology evidence="4">Single-pass type I membrane protein</topology>
    </subcellularLocation>
</comment>
<comment type="similarity">
    <text evidence="4">Belongs to the RLP family.</text>
</comment>
<comment type="sequence caution" evidence="4">
    <conflict type="erroneous gene model prediction">
        <sequence resource="EMBL-CDS" id="BAB10898"/>
    </conflict>
</comment>
<gene>
    <name evidence="3" type="primary">RLP54</name>
    <name evidence="5" type="ordered locus">At5g40170</name>
    <name evidence="6" type="ORF">MSN9.7</name>
</gene>
<accession>F4KHA2</accession>
<accession>Q9FL15</accession>
<feature type="signal peptide" evidence="1">
    <location>
        <begin position="1"/>
        <end position="21"/>
    </location>
</feature>
<feature type="chain" id="PRO_5003309975" description="Receptor-like protein 54">
    <location>
        <begin position="22"/>
        <end position="792"/>
    </location>
</feature>
<feature type="topological domain" description="Extracellular" evidence="1">
    <location>
        <begin position="22"/>
        <end position="758"/>
    </location>
</feature>
<feature type="transmembrane region" description="Helical" evidence="1">
    <location>
        <begin position="759"/>
        <end position="779"/>
    </location>
</feature>
<feature type="topological domain" description="Cytoplasmic" evidence="1">
    <location>
        <begin position="780"/>
        <end position="792"/>
    </location>
</feature>
<feature type="repeat" description="LRR 1" evidence="1">
    <location>
        <begin position="114"/>
        <end position="137"/>
    </location>
</feature>
<feature type="repeat" description="LRR 2" evidence="1">
    <location>
        <begin position="139"/>
        <end position="162"/>
    </location>
</feature>
<feature type="repeat" description="LRR 3" evidence="1">
    <location>
        <begin position="163"/>
        <end position="187"/>
    </location>
</feature>
<feature type="repeat" description="LRR 4" evidence="1">
    <location>
        <begin position="189"/>
        <end position="209"/>
    </location>
</feature>
<feature type="repeat" description="LRR 5" evidence="1">
    <location>
        <begin position="211"/>
        <end position="233"/>
    </location>
</feature>
<feature type="repeat" description="LRR 6" evidence="1">
    <location>
        <begin position="235"/>
        <end position="258"/>
    </location>
</feature>
<feature type="repeat" description="LRR 7" evidence="1">
    <location>
        <begin position="259"/>
        <end position="282"/>
    </location>
</feature>
<feature type="repeat" description="LRR 8" evidence="1">
    <location>
        <begin position="283"/>
        <end position="302"/>
    </location>
</feature>
<feature type="repeat" description="LRR 9" evidence="1">
    <location>
        <begin position="303"/>
        <end position="324"/>
    </location>
</feature>
<feature type="repeat" description="LRR 10" evidence="1">
    <location>
        <begin position="325"/>
        <end position="349"/>
    </location>
</feature>
<feature type="repeat" description="LRR 11" evidence="1">
    <location>
        <begin position="351"/>
        <end position="374"/>
    </location>
</feature>
<feature type="repeat" description="LRR 12" evidence="1">
    <location>
        <begin position="375"/>
        <end position="399"/>
    </location>
</feature>
<feature type="repeat" description="LRR 13; degenerate" evidence="4">
    <location>
        <begin position="400"/>
        <end position="418"/>
    </location>
</feature>
<feature type="repeat" description="LRR 15" evidence="1">
    <location>
        <begin position="419"/>
        <end position="443"/>
    </location>
</feature>
<feature type="repeat" description="LRR 15" evidence="1">
    <location>
        <begin position="444"/>
        <end position="470"/>
    </location>
</feature>
<feature type="repeat" description="LRR 16" evidence="1">
    <location>
        <begin position="472"/>
        <end position="489"/>
    </location>
</feature>
<feature type="repeat" description="LRR 17" evidence="1">
    <location>
        <begin position="490"/>
        <end position="515"/>
    </location>
</feature>
<feature type="repeat" description="LRR 18; degenerate" evidence="4">
    <location>
        <begin position="516"/>
        <end position="536"/>
    </location>
</feature>
<feature type="repeat" description="LRR 19" evidence="1">
    <location>
        <begin position="539"/>
        <end position="563"/>
    </location>
</feature>
<feature type="repeat" description="LRR 20" evidence="1">
    <location>
        <begin position="614"/>
        <end position="637"/>
    </location>
</feature>
<feature type="repeat" description="LRR 21" evidence="1">
    <location>
        <begin position="638"/>
        <end position="661"/>
    </location>
</feature>
<feature type="repeat" description="LRR 22" evidence="1">
    <location>
        <begin position="662"/>
        <end position="685"/>
    </location>
</feature>
<feature type="repeat" description="LRR 23" evidence="1">
    <location>
        <begin position="687"/>
        <end position="709"/>
    </location>
</feature>
<feature type="glycosylation site" description="N-linked (GlcNAc...) asparagine" evidence="2">
    <location>
        <position position="68"/>
    </location>
</feature>
<feature type="glycosylation site" description="N-linked (GlcNAc...) asparagine" evidence="2">
    <location>
        <position position="107"/>
    </location>
</feature>
<feature type="glycosylation site" description="N-linked (GlcNAc...) asparagine" evidence="2">
    <location>
        <position position="161"/>
    </location>
</feature>
<feature type="glycosylation site" description="N-linked (GlcNAc...) asparagine" evidence="2">
    <location>
        <position position="230"/>
    </location>
</feature>
<feature type="glycosylation site" description="N-linked (GlcNAc...) asparagine" evidence="2">
    <location>
        <position position="304"/>
    </location>
</feature>
<feature type="glycosylation site" description="N-linked (GlcNAc...) asparagine" evidence="2">
    <location>
        <position position="314"/>
    </location>
</feature>
<feature type="glycosylation site" description="N-linked (GlcNAc...) asparagine" evidence="2">
    <location>
        <position position="356"/>
    </location>
</feature>
<feature type="glycosylation site" description="N-linked (GlcNAc...) asparagine" evidence="2">
    <location>
        <position position="374"/>
    </location>
</feature>
<feature type="glycosylation site" description="N-linked (GlcNAc...) asparagine" evidence="2">
    <location>
        <position position="431"/>
    </location>
</feature>
<feature type="glycosylation site" description="N-linked (GlcNAc...) asparagine" evidence="2">
    <location>
        <position position="442"/>
    </location>
</feature>
<feature type="glycosylation site" description="N-linked (GlcNAc...) asparagine" evidence="2">
    <location>
        <position position="454"/>
    </location>
</feature>
<feature type="glycosylation site" description="N-linked (GlcNAc...) asparagine" evidence="2">
    <location>
        <position position="488"/>
    </location>
</feature>
<feature type="glycosylation site" description="N-linked (GlcNAc...) asparagine" evidence="2">
    <location>
        <position position="503"/>
    </location>
</feature>
<feature type="glycosylation site" description="N-linked (GlcNAc...) asparagine" evidence="2">
    <location>
        <position position="553"/>
    </location>
</feature>
<feature type="glycosylation site" description="N-linked (GlcNAc...) asparagine" evidence="2">
    <location>
        <position position="563"/>
    </location>
</feature>
<feature type="glycosylation site" description="N-linked (GlcNAc...) asparagine" evidence="2">
    <location>
        <position position="647"/>
    </location>
</feature>
<feature type="glycosylation site" description="N-linked (GlcNAc...) asparagine" evidence="2">
    <location>
        <position position="692"/>
    </location>
</feature>
<evidence type="ECO:0000255" key="1"/>
<evidence type="ECO:0000255" key="2">
    <source>
        <dbReference type="PROSITE-ProRule" id="PRU00498"/>
    </source>
</evidence>
<evidence type="ECO:0000303" key="3">
    <source>
    </source>
</evidence>
<evidence type="ECO:0000305" key="4"/>
<evidence type="ECO:0000312" key="5">
    <source>
        <dbReference type="Araport" id="AT5G40170"/>
    </source>
</evidence>
<evidence type="ECO:0000312" key="6">
    <source>
        <dbReference type="EMBL" id="BAB10898.1"/>
    </source>
</evidence>
<name>RLP54_ARATH</name>
<keyword id="KW-1003">Cell membrane</keyword>
<keyword id="KW-0325">Glycoprotein</keyword>
<keyword id="KW-0433">Leucine-rich repeat</keyword>
<keyword id="KW-0472">Membrane</keyword>
<keyword id="KW-0675">Receptor</keyword>
<keyword id="KW-1185">Reference proteome</keyword>
<keyword id="KW-0677">Repeat</keyword>
<keyword id="KW-0732">Signal</keyword>
<keyword id="KW-0812">Transmembrane</keyword>
<keyword id="KW-1133">Transmembrane helix</keyword>
<protein>
    <recommendedName>
        <fullName evidence="3">Receptor-like protein 54</fullName>
        <shortName evidence="3">AtRLP54</shortName>
    </recommendedName>
</protein>
<sequence length="792" mass="88797">MKSNLAVFFITCFFCCVFVTSDSVYTLPFPFPRDQVEILLELKNEFPSFNCDLTWKLDYFGRMDTRANISSWTKDSDSFSGVSFDSETGVVKELSLGRQCLTSLKANSSLFRFQHLRYLDLSENHFDSSPIPSGFGRLTYLESLDLSKNGFIGEVPSSISNLSRLTNLDLSYNKLTGGIPNLHSLTLLENIDLSYNKFSGAIPSYLFTMPFLVSLNLRQNHLSDPLENINYSATSKLLILDMAYNLMSHRILEPISKLANLIQIDLSFQKTPYTFNFDFLLFKSLVRLDLSGNSVSVVGTGSENLTHLDLSSCNITEFPMFIKDLQRLWWLDISNNRIKGKVPELLWTLPSMLHVNLSRNSFDSLEGTPKIILNSSISELDLSSNAFKGSFPIIPPYVNIMAASNNYFTGGIPLIFCKRYRLSLLDLSNNNFSGTIPRCLTNVSLGLEALKLSNNSLTGRLPDIEDRLVLLDVGHNQISGKLPRSLVNCTTLKFLNVEGNHINDTFPFWLKALTRLEIIVLRSNRFHGPISSPEVSLSFTALRIIDISRNSFNGSLPQNYFANWSAPLVNTPQGYRWPEYTGDEHSKYETPLWSYPSIHLRIKGRSIELGKIPDTYTSIDFSGNSFEGQIPESIGDLKSLIVLDLSNNSFTGRIPSSLAKLKQLESLDLSQNRISGNIPQELRELTFLGYVNMSHNRLTGQIPQSTQVGGQPKSSFEGNINLCGLPLQESCLRGNGVPSTPHTQEQELPKQEHALNWKAAAIGYGPGVLFGLAIGQAFARYKPVLFYKLFRL</sequence>
<proteinExistence type="inferred from homology"/>
<reference key="1">
    <citation type="journal article" date="1998" name="DNA Res.">
        <title>Structural analysis of Arabidopsis thaliana chromosome 5. V. Sequence features of the regions of 1,381,565 bp covered by twenty one physically assigned P1 and TAC clones.</title>
        <authorList>
            <person name="Kaneko T."/>
            <person name="Kotani H."/>
            <person name="Nakamura Y."/>
            <person name="Sato S."/>
            <person name="Asamizu E."/>
            <person name="Miyajima N."/>
            <person name="Tabata S."/>
        </authorList>
    </citation>
    <scope>NUCLEOTIDE SEQUENCE [LARGE SCALE GENOMIC DNA]</scope>
    <source>
        <strain>cv. Columbia</strain>
    </source>
</reference>
<reference key="2">
    <citation type="journal article" date="2017" name="Plant J.">
        <title>Araport11: a complete reannotation of the Arabidopsis thaliana reference genome.</title>
        <authorList>
            <person name="Cheng C.Y."/>
            <person name="Krishnakumar V."/>
            <person name="Chan A.P."/>
            <person name="Thibaud-Nissen F."/>
            <person name="Schobel S."/>
            <person name="Town C.D."/>
        </authorList>
    </citation>
    <scope>GENOME REANNOTATION</scope>
    <source>
        <strain>cv. Columbia</strain>
    </source>
</reference>
<reference key="3">
    <citation type="journal article" date="2005" name="Plant Physiol.">
        <title>Phylogenomic analysis of the receptor-like proteins of rice and Arabidopsis.</title>
        <authorList>
            <person name="Fritz-Laylin L.K."/>
            <person name="Krishnamurthy N."/>
            <person name="Toer M."/>
            <person name="Sjoelander K.V."/>
            <person name="Jones J.D."/>
        </authorList>
    </citation>
    <scope>GENE FAMILY</scope>
</reference>
<reference key="4">
    <citation type="journal article" date="2008" name="Plant Physiol.">
        <title>A genome-wide functional investigation into the roles of receptor-like proteins in Arabidopsis.</title>
        <authorList>
            <person name="Wang G."/>
            <person name="Ellendorff U."/>
            <person name="Kemp B."/>
            <person name="Mansfield J.W."/>
            <person name="Forsyth A."/>
            <person name="Mitchell K."/>
            <person name="Bastas K."/>
            <person name="Liu C.-M."/>
            <person name="Woods-Toer A."/>
            <person name="Zipfel C."/>
            <person name="de Wit P.J.G.M."/>
            <person name="Jones J.D.G."/>
            <person name="Toer M."/>
            <person name="Thomma B.P.H.J."/>
        </authorList>
    </citation>
    <scope>GENE FAMILY</scope>
    <scope>NOMENCLATURE</scope>
    <source>
        <strain>cv. Columbia</strain>
    </source>
</reference>
<organism>
    <name type="scientific">Arabidopsis thaliana</name>
    <name type="common">Mouse-ear cress</name>
    <dbReference type="NCBI Taxonomy" id="3702"/>
    <lineage>
        <taxon>Eukaryota</taxon>
        <taxon>Viridiplantae</taxon>
        <taxon>Streptophyta</taxon>
        <taxon>Embryophyta</taxon>
        <taxon>Tracheophyta</taxon>
        <taxon>Spermatophyta</taxon>
        <taxon>Magnoliopsida</taxon>
        <taxon>eudicotyledons</taxon>
        <taxon>Gunneridae</taxon>
        <taxon>Pentapetalae</taxon>
        <taxon>rosids</taxon>
        <taxon>malvids</taxon>
        <taxon>Brassicales</taxon>
        <taxon>Brassicaceae</taxon>
        <taxon>Camelineae</taxon>
        <taxon>Arabidopsis</taxon>
    </lineage>
</organism>